<dbReference type="EMBL" id="AF018268">
    <property type="protein sequence ID" value="AAB70571.1"/>
    <property type="molecule type" value="mRNA"/>
</dbReference>
<dbReference type="EMBL" id="AF018269">
    <property type="protein sequence ID" value="AAB70572.1"/>
    <property type="molecule type" value="mRNA"/>
</dbReference>
<dbReference type="EMBL" id="AF011428">
    <property type="protein sequence ID" value="AAD01445.1"/>
    <property type="molecule type" value="mRNA"/>
</dbReference>
<dbReference type="EMBL" id="AK159132">
    <property type="protein sequence ID" value="BAE34844.1"/>
    <property type="molecule type" value="mRNA"/>
</dbReference>
<dbReference type="EMBL" id="AK159181">
    <property type="protein sequence ID" value="BAE34880.1"/>
    <property type="molecule type" value="mRNA"/>
</dbReference>
<dbReference type="EMBL" id="AK159823">
    <property type="protein sequence ID" value="BAE35403.1"/>
    <property type="molecule type" value="mRNA"/>
</dbReference>
<dbReference type="EMBL" id="BC006799">
    <property type="protein sequence ID" value="AAH06799.1"/>
    <property type="molecule type" value="mRNA"/>
</dbReference>
<dbReference type="EMBL" id="BC094459">
    <property type="protein sequence ID" value="AAH94459.1"/>
    <property type="molecule type" value="mRNA"/>
</dbReference>
<dbReference type="CCDS" id="CCDS17451.1"/>
<dbReference type="RefSeq" id="NP_033820.2">
    <property type="nucleotide sequence ID" value="NM_009690.2"/>
</dbReference>
<dbReference type="SMR" id="Q9QWK4"/>
<dbReference type="BioGRID" id="198152">
    <property type="interactions" value="1"/>
</dbReference>
<dbReference type="FunCoup" id="Q9QWK4">
    <property type="interactions" value="60"/>
</dbReference>
<dbReference type="IntAct" id="Q9QWK4">
    <property type="interactions" value="1"/>
</dbReference>
<dbReference type="MINT" id="Q9QWK4"/>
<dbReference type="STRING" id="10090.ENSMUSP00000015998"/>
<dbReference type="GlyCosmos" id="Q9QWK4">
    <property type="glycosylation" value="2 sites, No reported glycans"/>
</dbReference>
<dbReference type="GlyGen" id="Q9QWK4">
    <property type="glycosylation" value="2 sites"/>
</dbReference>
<dbReference type="iPTMnet" id="Q9QWK4"/>
<dbReference type="PhosphoSitePlus" id="Q9QWK4"/>
<dbReference type="SwissPalm" id="Q9QWK4"/>
<dbReference type="CPTAC" id="non-CPTAC-5585"/>
<dbReference type="CPTAC" id="non-CPTAC-5586"/>
<dbReference type="jPOST" id="Q9QWK4"/>
<dbReference type="PaxDb" id="10090-ENSMUSP00000015998"/>
<dbReference type="PeptideAtlas" id="Q9QWK4"/>
<dbReference type="ProteomicsDB" id="281138"/>
<dbReference type="Antibodypedia" id="20452">
    <property type="antibodies" value="507 antibodies from 39 providers"/>
</dbReference>
<dbReference type="DNASU" id="11801"/>
<dbReference type="Ensembl" id="ENSMUST00000015998.8">
    <property type="protein sequence ID" value="ENSMUSP00000015998.7"/>
    <property type="gene ID" value="ENSMUSG00000015854.8"/>
</dbReference>
<dbReference type="GeneID" id="11801"/>
<dbReference type="KEGG" id="mmu:11801"/>
<dbReference type="UCSC" id="uc008psa.2">
    <property type="organism name" value="mouse"/>
</dbReference>
<dbReference type="AGR" id="MGI:1334419"/>
<dbReference type="CTD" id="922"/>
<dbReference type="MGI" id="MGI:1334419">
    <property type="gene designation" value="Cd5l"/>
</dbReference>
<dbReference type="VEuPathDB" id="HostDB:ENSMUSG00000015854"/>
<dbReference type="eggNOG" id="ENOG502SHID">
    <property type="taxonomic scope" value="Eukaryota"/>
</dbReference>
<dbReference type="GeneTree" id="ENSGT00940000161974"/>
<dbReference type="HOGENOM" id="CLU_002555_11_0_1"/>
<dbReference type="InParanoid" id="Q9QWK4"/>
<dbReference type="OMA" id="EQKGQWG"/>
<dbReference type="OrthoDB" id="536948at2759"/>
<dbReference type="PhylomeDB" id="Q9QWK4"/>
<dbReference type="TreeFam" id="TF329295"/>
<dbReference type="BioGRID-ORCS" id="11801">
    <property type="hits" value="1 hit in 76 CRISPR screens"/>
</dbReference>
<dbReference type="PRO" id="PR:Q9QWK4"/>
<dbReference type="Proteomes" id="UP000000589">
    <property type="component" value="Chromosome 3"/>
</dbReference>
<dbReference type="RNAct" id="Q9QWK4">
    <property type="molecule type" value="protein"/>
</dbReference>
<dbReference type="Bgee" id="ENSMUSG00000015854">
    <property type="expression patterns" value="Expressed in stroma of bone marrow and 52 other cell types or tissues"/>
</dbReference>
<dbReference type="GO" id="GO:0009986">
    <property type="term" value="C:cell surface"/>
    <property type="evidence" value="ECO:0000314"/>
    <property type="project" value="MGI"/>
</dbReference>
<dbReference type="GO" id="GO:0005737">
    <property type="term" value="C:cytoplasm"/>
    <property type="evidence" value="ECO:0007669"/>
    <property type="project" value="UniProtKB-SubCell"/>
</dbReference>
<dbReference type="GO" id="GO:0005576">
    <property type="term" value="C:extracellular region"/>
    <property type="evidence" value="ECO:0007669"/>
    <property type="project" value="UniProtKB-SubCell"/>
</dbReference>
<dbReference type="GO" id="GO:0005886">
    <property type="term" value="C:plasma membrane"/>
    <property type="evidence" value="ECO:0000314"/>
    <property type="project" value="MGI"/>
</dbReference>
<dbReference type="GO" id="GO:0006915">
    <property type="term" value="P:apoptotic process"/>
    <property type="evidence" value="ECO:0007669"/>
    <property type="project" value="UniProtKB-KW"/>
</dbReference>
<dbReference type="GO" id="GO:0002376">
    <property type="term" value="P:immune system process"/>
    <property type="evidence" value="ECO:0007669"/>
    <property type="project" value="UniProtKB-KW"/>
</dbReference>
<dbReference type="GO" id="GO:0006954">
    <property type="term" value="P:inflammatory response"/>
    <property type="evidence" value="ECO:0007669"/>
    <property type="project" value="UniProtKB-KW"/>
</dbReference>
<dbReference type="GO" id="GO:1903661">
    <property type="term" value="P:positive regulation of complement-dependent cytotoxicity"/>
    <property type="evidence" value="ECO:0000315"/>
    <property type="project" value="MGI"/>
</dbReference>
<dbReference type="GO" id="GO:0030449">
    <property type="term" value="P:regulation of complement activation"/>
    <property type="evidence" value="ECO:0000315"/>
    <property type="project" value="MGI"/>
</dbReference>
<dbReference type="FunFam" id="3.10.250.10:FF:000010">
    <property type="entry name" value="T-cell differentiation antigen CD6"/>
    <property type="match status" value="3"/>
</dbReference>
<dbReference type="Gene3D" id="3.10.250.10">
    <property type="entry name" value="SRCR-like domain"/>
    <property type="match status" value="3"/>
</dbReference>
<dbReference type="InterPro" id="IPR001190">
    <property type="entry name" value="SRCR"/>
</dbReference>
<dbReference type="InterPro" id="IPR036772">
    <property type="entry name" value="SRCR-like_dom_sf"/>
</dbReference>
<dbReference type="PANTHER" id="PTHR48071:SF8">
    <property type="entry name" value="CD5 ANTIGEN-LIKE"/>
    <property type="match status" value="1"/>
</dbReference>
<dbReference type="PANTHER" id="PTHR48071">
    <property type="entry name" value="SRCR DOMAIN-CONTAINING PROTEIN"/>
    <property type="match status" value="1"/>
</dbReference>
<dbReference type="Pfam" id="PF00530">
    <property type="entry name" value="SRCR"/>
    <property type="match status" value="3"/>
</dbReference>
<dbReference type="PRINTS" id="PR00258">
    <property type="entry name" value="SPERACTRCPTR"/>
</dbReference>
<dbReference type="SMART" id="SM00202">
    <property type="entry name" value="SR"/>
    <property type="match status" value="3"/>
</dbReference>
<dbReference type="SUPFAM" id="SSF56487">
    <property type="entry name" value="SRCR-like"/>
    <property type="match status" value="3"/>
</dbReference>
<dbReference type="PROSITE" id="PS00420">
    <property type="entry name" value="SRCR_1"/>
    <property type="match status" value="1"/>
</dbReference>
<dbReference type="PROSITE" id="PS50287">
    <property type="entry name" value="SRCR_2"/>
    <property type="match status" value="3"/>
</dbReference>
<gene>
    <name type="primary">Cd5l</name>
    <name evidence="19" type="synonym">Aim</name>
    <name type="synonym">Api6</name>
</gene>
<name>CD5L_MOUSE</name>
<sequence>MAPLFNLMLAILSIFVGSCFSESPTKVQLVGGAHRCEGRVEVEHNGQWGTVCDDGWDRRDVAVVCRELNCGAVIQTPRGASYQPPASEQRVLIQGVDCNGTEDTLAQCELNYDVFDCSHEEDAGAQCENPDSDLLFIPEDVRLVDGPGHCQGRVEVLHQSQWSTVCKAGWNLQVSKVVCRQLGCGRALLTYGSCNKNTQGKGPIWMGKMSCSGQEANLRSCLLSRLENNCTHGEDTWMECEDPFELKLVGGDTPCSGRLEVLHKGSWGSVCDDNWGEKEDQVVCKQLGCGKSLHPSPKTRKIYGPGAGRIWLDDVNCSGKEQSLEFCRHRLWGYHDCTHKEDVEVICTDFDV</sequence>
<feature type="signal peptide" evidence="2">
    <location>
        <begin position="1"/>
        <end position="21"/>
    </location>
</feature>
<feature type="chain" id="PRO_0000033226" description="CD5 antigen-like">
    <location>
        <begin position="22"/>
        <end position="352"/>
    </location>
</feature>
<feature type="domain" description="SRCR 1" evidence="3">
    <location>
        <begin position="27"/>
        <end position="128"/>
    </location>
</feature>
<feature type="domain" description="SRCR 2" evidence="3">
    <location>
        <begin position="141"/>
        <end position="241"/>
    </location>
</feature>
<feature type="domain" description="SRCR 3" evidence="3">
    <location>
        <begin position="246"/>
        <end position="348"/>
    </location>
</feature>
<feature type="site" description="Not glycosylated" evidence="10">
    <location>
        <position position="316"/>
    </location>
</feature>
<feature type="glycosylation site" description="N-linked (GlcNAc...) asparagine" evidence="10">
    <location>
        <position position="99"/>
    </location>
</feature>
<feature type="glycosylation site" description="N-linked (GlcNAc...) asparagine" evidence="10">
    <location>
        <position position="229"/>
    </location>
</feature>
<feature type="disulfide bond" evidence="3">
    <location>
        <begin position="36"/>
        <end position="70"/>
    </location>
</feature>
<feature type="disulfide bond" evidence="3">
    <location>
        <begin position="52"/>
        <end position="117"/>
    </location>
</feature>
<feature type="disulfide bond" evidence="3">
    <location>
        <begin position="65"/>
        <end position="127"/>
    </location>
</feature>
<feature type="disulfide bond" evidence="3">
    <location>
        <begin position="98"/>
        <end position="108"/>
    </location>
</feature>
<feature type="disulfide bond" evidence="3">
    <location>
        <begin position="166"/>
        <end position="230"/>
    </location>
</feature>
<feature type="disulfide bond" evidence="3">
    <location>
        <begin position="179"/>
        <end position="240"/>
    </location>
</feature>
<feature type="disulfide bond" description="Interchain (with C-414 of IGHM)" evidence="21">
    <location>
        <position position="194"/>
    </location>
</feature>
<feature type="disulfide bond" evidence="3">
    <location>
        <begin position="211"/>
        <end position="221"/>
    </location>
</feature>
<feature type="disulfide bond" evidence="3">
    <location>
        <begin position="255"/>
        <end position="289"/>
    </location>
</feature>
<feature type="disulfide bond" evidence="3">
    <location>
        <begin position="271"/>
        <end position="337"/>
    </location>
</feature>
<feature type="disulfide bond" evidence="3">
    <location>
        <begin position="284"/>
        <end position="347"/>
    </location>
</feature>
<feature type="disulfide bond" evidence="3">
    <location>
        <begin position="317"/>
        <end position="327"/>
    </location>
</feature>
<feature type="sequence variant" evidence="4">
    <original>V</original>
    <variation>M</variation>
    <location>
        <position position="61"/>
    </location>
</feature>
<feature type="sequence variant" evidence="4 5">
    <original>N</original>
    <variation>S</variation>
    <location>
        <position position="197"/>
    </location>
</feature>
<feature type="sequence variant" evidence="4">
    <original>W</original>
    <variation>R</variation>
    <location>
        <position position="205"/>
    </location>
</feature>
<feature type="mutagenesis site" description="Decreased glycosylation." evidence="10">
    <original>N</original>
    <variation>Q</variation>
    <location>
        <position position="99"/>
    </location>
</feature>
<feature type="mutagenesis site" description="Abolishes interaction with IgM." evidence="14">
    <original>C</original>
    <variation>S</variation>
    <location>
        <position position="194"/>
    </location>
</feature>
<feature type="mutagenesis site" description="Decreased glycosylation." evidence="10">
    <original>N</original>
    <variation>Q</variation>
    <location>
        <position position="229"/>
    </location>
</feature>
<feature type="mutagenesis site" description="Does not affect glycosylation." evidence="10">
    <original>N</original>
    <variation>Q</variation>
    <location>
        <position position="316"/>
    </location>
</feature>
<feature type="sequence conflict" description="In Ref. 1; AAB70571." evidence="20" ref="1">
    <original>S</original>
    <variation>N</variation>
    <location>
        <position position="13"/>
    </location>
</feature>
<feature type="sequence conflict" description="In Ref. 2; AAD01445." evidence="20" ref="2">
    <original>D</original>
    <variation>Y</variation>
    <location>
        <position position="113"/>
    </location>
</feature>
<reference key="1">
    <citation type="journal article" date="2000" name="Immunology">
        <title>Molecular cloning, genomic organization and cell-binding characteristics of mouse Spalpha.</title>
        <authorList>
            <person name="Gebe J.A."/>
            <person name="Llewellyn M.-B.C."/>
            <person name="Hoggatt H."/>
            <person name="Aruffo A."/>
        </authorList>
    </citation>
    <scope>NUCLEOTIDE SEQUENCE [MRNA]</scope>
    <scope>VARIANTS MET-61; SER-197 AND ARG-205</scope>
    <scope>TISSUE SPECIFICITY</scope>
    <scope>GLYCOSYLATION</scope>
    <source>
        <strain>BALB/cJ</strain>
        <tissue>Thymus</tissue>
    </source>
</reference>
<reference key="2">
    <citation type="journal article" date="1999" name="J. Exp. Med.">
        <title>Increased susceptibility of thymocytes to apoptosis in mice lacking AIM, a novel murine macrophage-derived soluble factor belonging to the scavenger receptor cysteine-rich domain superfamily.</title>
        <authorList>
            <person name="Miyazaki T."/>
            <person name="Hirokami Y."/>
            <person name="Matsuhashi N."/>
            <person name="Takatsuka H."/>
            <person name="Naito M."/>
        </authorList>
    </citation>
    <scope>NUCLEOTIDE SEQUENCE [MRNA]</scope>
    <scope>FUNCTION IN APOPTOSIS</scope>
</reference>
<reference key="3">
    <citation type="journal article" date="2005" name="Science">
        <title>The transcriptional landscape of the mammalian genome.</title>
        <authorList>
            <person name="Carninci P."/>
            <person name="Kasukawa T."/>
            <person name="Katayama S."/>
            <person name="Gough J."/>
            <person name="Frith M.C."/>
            <person name="Maeda N."/>
            <person name="Oyama R."/>
            <person name="Ravasi T."/>
            <person name="Lenhard B."/>
            <person name="Wells C."/>
            <person name="Kodzius R."/>
            <person name="Shimokawa K."/>
            <person name="Bajic V.B."/>
            <person name="Brenner S.E."/>
            <person name="Batalov S."/>
            <person name="Forrest A.R."/>
            <person name="Zavolan M."/>
            <person name="Davis M.J."/>
            <person name="Wilming L.G."/>
            <person name="Aidinis V."/>
            <person name="Allen J.E."/>
            <person name="Ambesi-Impiombato A."/>
            <person name="Apweiler R."/>
            <person name="Aturaliya R.N."/>
            <person name="Bailey T.L."/>
            <person name="Bansal M."/>
            <person name="Baxter L."/>
            <person name="Beisel K.W."/>
            <person name="Bersano T."/>
            <person name="Bono H."/>
            <person name="Chalk A.M."/>
            <person name="Chiu K.P."/>
            <person name="Choudhary V."/>
            <person name="Christoffels A."/>
            <person name="Clutterbuck D.R."/>
            <person name="Crowe M.L."/>
            <person name="Dalla E."/>
            <person name="Dalrymple B.P."/>
            <person name="de Bono B."/>
            <person name="Della Gatta G."/>
            <person name="di Bernardo D."/>
            <person name="Down T."/>
            <person name="Engstrom P."/>
            <person name="Fagiolini M."/>
            <person name="Faulkner G."/>
            <person name="Fletcher C.F."/>
            <person name="Fukushima T."/>
            <person name="Furuno M."/>
            <person name="Futaki S."/>
            <person name="Gariboldi M."/>
            <person name="Georgii-Hemming P."/>
            <person name="Gingeras T.R."/>
            <person name="Gojobori T."/>
            <person name="Green R.E."/>
            <person name="Gustincich S."/>
            <person name="Harbers M."/>
            <person name="Hayashi Y."/>
            <person name="Hensch T.K."/>
            <person name="Hirokawa N."/>
            <person name="Hill D."/>
            <person name="Huminiecki L."/>
            <person name="Iacono M."/>
            <person name="Ikeo K."/>
            <person name="Iwama A."/>
            <person name="Ishikawa T."/>
            <person name="Jakt M."/>
            <person name="Kanapin A."/>
            <person name="Katoh M."/>
            <person name="Kawasawa Y."/>
            <person name="Kelso J."/>
            <person name="Kitamura H."/>
            <person name="Kitano H."/>
            <person name="Kollias G."/>
            <person name="Krishnan S.P."/>
            <person name="Kruger A."/>
            <person name="Kummerfeld S.K."/>
            <person name="Kurochkin I.V."/>
            <person name="Lareau L.F."/>
            <person name="Lazarevic D."/>
            <person name="Lipovich L."/>
            <person name="Liu J."/>
            <person name="Liuni S."/>
            <person name="McWilliam S."/>
            <person name="Madan Babu M."/>
            <person name="Madera M."/>
            <person name="Marchionni L."/>
            <person name="Matsuda H."/>
            <person name="Matsuzawa S."/>
            <person name="Miki H."/>
            <person name="Mignone F."/>
            <person name="Miyake S."/>
            <person name="Morris K."/>
            <person name="Mottagui-Tabar S."/>
            <person name="Mulder N."/>
            <person name="Nakano N."/>
            <person name="Nakauchi H."/>
            <person name="Ng P."/>
            <person name="Nilsson R."/>
            <person name="Nishiguchi S."/>
            <person name="Nishikawa S."/>
            <person name="Nori F."/>
            <person name="Ohara O."/>
            <person name="Okazaki Y."/>
            <person name="Orlando V."/>
            <person name="Pang K.C."/>
            <person name="Pavan W.J."/>
            <person name="Pavesi G."/>
            <person name="Pesole G."/>
            <person name="Petrovsky N."/>
            <person name="Piazza S."/>
            <person name="Reed J."/>
            <person name="Reid J.F."/>
            <person name="Ring B.Z."/>
            <person name="Ringwald M."/>
            <person name="Rost B."/>
            <person name="Ruan Y."/>
            <person name="Salzberg S.L."/>
            <person name="Sandelin A."/>
            <person name="Schneider C."/>
            <person name="Schoenbach C."/>
            <person name="Sekiguchi K."/>
            <person name="Semple C.A."/>
            <person name="Seno S."/>
            <person name="Sessa L."/>
            <person name="Sheng Y."/>
            <person name="Shibata Y."/>
            <person name="Shimada H."/>
            <person name="Shimada K."/>
            <person name="Silva D."/>
            <person name="Sinclair B."/>
            <person name="Sperling S."/>
            <person name="Stupka E."/>
            <person name="Sugiura K."/>
            <person name="Sultana R."/>
            <person name="Takenaka Y."/>
            <person name="Taki K."/>
            <person name="Tammoja K."/>
            <person name="Tan S.L."/>
            <person name="Tang S."/>
            <person name="Taylor M.S."/>
            <person name="Tegner J."/>
            <person name="Teichmann S.A."/>
            <person name="Ueda H.R."/>
            <person name="van Nimwegen E."/>
            <person name="Verardo R."/>
            <person name="Wei C.L."/>
            <person name="Yagi K."/>
            <person name="Yamanishi H."/>
            <person name="Zabarovsky E."/>
            <person name="Zhu S."/>
            <person name="Zimmer A."/>
            <person name="Hide W."/>
            <person name="Bult C."/>
            <person name="Grimmond S.M."/>
            <person name="Teasdale R.D."/>
            <person name="Liu E.T."/>
            <person name="Brusic V."/>
            <person name="Quackenbush J."/>
            <person name="Wahlestedt C."/>
            <person name="Mattick J.S."/>
            <person name="Hume D.A."/>
            <person name="Kai C."/>
            <person name="Sasaki D."/>
            <person name="Tomaru Y."/>
            <person name="Fukuda S."/>
            <person name="Kanamori-Katayama M."/>
            <person name="Suzuki M."/>
            <person name="Aoki J."/>
            <person name="Arakawa T."/>
            <person name="Iida J."/>
            <person name="Imamura K."/>
            <person name="Itoh M."/>
            <person name="Kato T."/>
            <person name="Kawaji H."/>
            <person name="Kawagashira N."/>
            <person name="Kawashima T."/>
            <person name="Kojima M."/>
            <person name="Kondo S."/>
            <person name="Konno H."/>
            <person name="Nakano K."/>
            <person name="Ninomiya N."/>
            <person name="Nishio T."/>
            <person name="Okada M."/>
            <person name="Plessy C."/>
            <person name="Shibata K."/>
            <person name="Shiraki T."/>
            <person name="Suzuki S."/>
            <person name="Tagami M."/>
            <person name="Waki K."/>
            <person name="Watahiki A."/>
            <person name="Okamura-Oho Y."/>
            <person name="Suzuki H."/>
            <person name="Kawai J."/>
            <person name="Hayashizaki Y."/>
        </authorList>
    </citation>
    <scope>NUCLEOTIDE SEQUENCE [LARGE SCALE MRNA]</scope>
    <source>
        <strain>C57BL/6J</strain>
    </source>
</reference>
<reference key="4">
    <citation type="journal article" date="2004" name="Genome Res.">
        <title>The status, quality, and expansion of the NIH full-length cDNA project: the Mammalian Gene Collection (MGC).</title>
        <authorList>
            <consortium name="The MGC Project Team"/>
        </authorList>
    </citation>
    <scope>NUCLEOTIDE SEQUENCE [LARGE SCALE MRNA]</scope>
    <scope>VARIANT SER-197</scope>
    <source>
        <strain>FVB/N</strain>
        <tissue>Liver</tissue>
        <tissue>Mammary tumor</tissue>
    </source>
</reference>
<reference key="5">
    <citation type="journal article" date="2005" name="Cell Metab.">
        <title>A role for the apoptosis inhibitory factor AIM/Spalpha/Api6 in atherosclerosis development.</title>
        <authorList>
            <person name="Arai S."/>
            <person name="Shelton J.M."/>
            <person name="Chen M."/>
            <person name="Bradley M.N."/>
            <person name="Castrillo A."/>
            <person name="Bookout A.L."/>
            <person name="Mak P.A."/>
            <person name="Edwards P.A."/>
            <person name="Mangelsdorf D.J."/>
            <person name="Tontonoz P."/>
            <person name="Miyazaki T."/>
        </authorList>
    </citation>
    <scope>FUNCTION</scope>
</reference>
<reference key="6">
    <citation type="journal article" date="2010" name="Cell Metab.">
        <title>Macrophage-derived AIM is endocytosed into adipocytes and decreases lipid droplets via inhibition of fatty acid synthase activity.</title>
        <authorList>
            <person name="Kurokawa J."/>
            <person name="Arai S."/>
            <person name="Nakashima K."/>
            <person name="Nagano H."/>
            <person name="Nishijima A."/>
            <person name="Miyata K."/>
            <person name="Ose R."/>
            <person name="Mori M."/>
            <person name="Kubota N."/>
            <person name="Kadowaki T."/>
            <person name="Oike Y."/>
            <person name="Koga H."/>
            <person name="Febbraio M."/>
            <person name="Iwanaga T."/>
            <person name="Miyazaki T."/>
        </authorList>
    </citation>
    <scope>FUNCTION</scope>
    <scope>SUBCELLULAR LOCATION</scope>
    <scope>INTERACTION WITH FASN</scope>
</reference>
<reference key="7">
    <citation type="journal article" date="2011" name="Proc. Natl. Acad. Sci. U.S.A.">
        <title>Apoptosis inhibitor of macrophage (AIM) is required for obesity-associated recruitment of inflammatory macrophages into adipose tissue.</title>
        <authorList>
            <person name="Kurokawa J."/>
            <person name="Nagano H."/>
            <person name="Ohara O."/>
            <person name="Kubota N."/>
            <person name="Kadowaki T."/>
            <person name="Arai S."/>
            <person name="Miyazaki T."/>
        </authorList>
    </citation>
    <scope>FUNCTION</scope>
</reference>
<reference key="8">
    <citation type="journal article" date="2012" name="Biochem. Biophys. Res. Commun.">
        <title>Apoptosis inhibitor of macrophage (AIM) diminishes lipid droplet-coating proteins leading to lipolysis in adipocytes.</title>
        <authorList>
            <person name="Iwamura Y."/>
            <person name="Mori M."/>
            <person name="Nakashima K."/>
            <person name="Mikami T."/>
            <person name="Murayama K."/>
            <person name="Arai S."/>
            <person name="Miyazaki T."/>
        </authorList>
    </citation>
    <scope>FUNCTION</scope>
</reference>
<reference key="9">
    <citation type="journal article" date="2012" name="FEBS Lett.">
        <title>Modification of N-glycosylation modulates the secretion and lipolytic function of apoptosis inhibitor of macrophage (AIM).</title>
        <authorList>
            <person name="Mori M."/>
            <person name="Kimura H."/>
            <person name="Iwamura Y."/>
            <person name="Arai S."/>
            <person name="Miyazaki T."/>
        </authorList>
    </citation>
    <scope>SUBCELLULAR LOCATION</scope>
    <scope>GLYCOSYLATION AT ASN-99 AND ASN-229</scope>
    <scope>LACK OF GLYCOSYLATION AT ASN-316</scope>
    <scope>MUTAGENESIS OF ASN-99; ASN-229 AND ASN-316</scope>
</reference>
<reference key="10">
    <citation type="journal article" date="2013" name="Cell Rep.">
        <title>Obesity-associated autoantibody production requires AIM to retain the immunoglobulin M immune complex on follicular dendritic cells.</title>
        <authorList>
            <person name="Arai S."/>
            <person name="Maehara N."/>
            <person name="Iwamura Y."/>
            <person name="Honda S."/>
            <person name="Nakashima K."/>
            <person name="Kai T."/>
            <person name="Ogishi M."/>
            <person name="Morita K."/>
            <person name="Kurokawa J."/>
            <person name="Mori M."/>
            <person name="Motoi Y."/>
            <person name="Miyake K."/>
            <person name="Matsuhashi N."/>
            <person name="Yamamura K."/>
            <person name="Ohara O."/>
            <person name="Shibuya A."/>
            <person name="Wakeland E.K."/>
            <person name="Li Q.Z."/>
            <person name="Miyazaki T."/>
        </authorList>
    </citation>
    <scope>FUNCTION</scope>
</reference>
<reference key="11">
    <citation type="journal article" date="2015" name="Cell">
        <title>Single-cell genomics unveils critical regulators of Th17 cell pathogenicity.</title>
        <authorList>
            <person name="Gaublomme J.T."/>
            <person name="Yosef N."/>
            <person name="Lee Y."/>
            <person name="Gertner R.S."/>
            <person name="Yang L.V."/>
            <person name="Wu C."/>
            <person name="Pandolfi P.P."/>
            <person name="Mak T."/>
            <person name="Satija R."/>
            <person name="Shalek A.K."/>
            <person name="Kuchroo V.K."/>
            <person name="Park H."/>
            <person name="Regev A."/>
        </authorList>
    </citation>
    <scope>FUNCTION</scope>
</reference>
<reference key="12">
    <citation type="journal article" date="2015" name="Cell">
        <title>CD5L/AIM regulates lipid biosynthesis and restrains Th17 cell pathogenicity.</title>
        <authorList>
            <person name="Wang C."/>
            <person name="Yosef N."/>
            <person name="Gaublomme J."/>
            <person name="Wu C."/>
            <person name="Lee Y."/>
            <person name="Clish C.B."/>
            <person name="Kaminski J."/>
            <person name="Xiao S."/>
            <person name="Meyer Zu Horste G."/>
            <person name="Pawlak M."/>
            <person name="Kishi Y."/>
            <person name="Joller N."/>
            <person name="Karwacz K."/>
            <person name="Zhu C."/>
            <person name="Ordovas-Montanes M."/>
            <person name="Madi A."/>
            <person name="Wortman I."/>
            <person name="Miyazaki T."/>
            <person name="Sobel R.A."/>
            <person name="Park H."/>
            <person name="Regev A."/>
            <person name="Kuchroo V.K."/>
        </authorList>
    </citation>
    <scope>FUNCTION</scope>
    <scope>TISSUE SPECIFICITY</scope>
    <scope>DISRUPTION PHENOTYPE</scope>
</reference>
<reference key="13">
    <citation type="journal article" date="2015" name="J. Leukoc. Biol.">
        <title>AIM/CD5L: a key protein in the control of immune homeostasis and inflammatory disease.</title>
        <authorList>
            <person name="Sanjurjo L."/>
            <person name="Aran G."/>
            <person name="Roher N."/>
            <person name="Valledor A.F."/>
            <person name="Sarrias M.R."/>
        </authorList>
    </citation>
    <scope>REVIEW</scope>
</reference>
<reference key="14">
    <citation type="journal article" date="2018" name="Sci. Adv.">
        <title>The IgM pentamer is an asymmetric pentagon with an open groove that binds the AIM protein.</title>
        <authorList>
            <person name="Hiramoto E."/>
            <person name="Tsutsumi A."/>
            <person name="Suzuki R."/>
            <person name="Matsuoka S."/>
            <person name="Arai S."/>
            <person name="Kikkawa M."/>
            <person name="Miyazaki T."/>
        </authorList>
    </citation>
    <scope>INTERACTION WITH IGHM</scope>
    <scope>DISULFIDE BOND</scope>
    <scope>MUTAGENESIS OF CYS-194</scope>
</reference>
<proteinExistence type="evidence at protein level"/>
<keyword id="KW-0053">Apoptosis</keyword>
<keyword id="KW-0963">Cytoplasm</keyword>
<keyword id="KW-1015">Disulfide bond</keyword>
<keyword id="KW-0325">Glycoprotein</keyword>
<keyword id="KW-0391">Immunity</keyword>
<keyword id="KW-0395">Inflammatory response</keyword>
<keyword id="KW-1185">Reference proteome</keyword>
<keyword id="KW-0677">Repeat</keyword>
<keyword id="KW-0964">Secreted</keyword>
<keyword id="KW-0732">Signal</keyword>
<comment type="function">
    <text evidence="1 6 7 8 9 11 12 13 15 18">Secreted protein that acts as a key regulator of lipid synthesis: mainly expressed by macrophages in lymphoid and inflamed tissues and regulates mechanisms in inflammatory responses, such as infection or atherosclerosis (PubMed:26048980). Able to inhibit lipid droplet size in adipocytes (PubMed:20519120, PubMed:22579686). Following incorporation into mature adipocytes via CD36-mediated endocytosis, associates with cytosolic FASN, inhibiting fatty acid synthase activity and leading to lipolysis, the degradation of triacylglycerols into glycerol and free fatty acids (FFA) (PubMed:20519120). CD5L-induced lipolysis occurs with progression of obesity: participates in obesity-associated inflammation following recruitment of inflammatory macrophages into adipose tissues, a cause of insulin resistance and obesity-related metabolic disease (PubMed:21730133). Regulation of intracellular lipids mediated by CD5L has a direct effect on transcription regulation mediated by nuclear receptors ROR-gamma (RORC) (PubMed:22579686, PubMed:26607793). Acts as a key regulator of metabolic switch in T-helper Th17 cells (PubMed:26607793, PubMed:26607794). Regulates the expression of pro-inflammatory genes in Th17 cells by altering the lipid content and limiting synthesis of cholesterol ligand of RORC, the master transcription factor of Th17-cell differentiation (PubMed:26607793). CD5L is mainly present in non-pathogenic Th17 cells, where it decreases the content of polyunsaturated fatty acyls (PUFA), affecting two metabolic proteins MSMO1 and CYP51A1, which synthesize ligands of RORC, limiting RORC activity and expression of pro-inflammatory genes (PubMed:26607793). Participates in obesity-associated autoimmunity via its association with IgM, interfering with the binding of IgM to Fcalpha/mu receptor and enhancing the development of long-lived plasma cells that produce high-affinity IgG autoantibodies (PubMed:23562157). Also acts as an inhibitor of apoptosis in macrophages: promotes macrophage survival from the apoptotic effects of oxidized lipids in case of atherosclerosis (PubMed:16054063, PubMed:9892623). Involved in early response to microbial infection against various pathogens by acting as a pattern recognition receptor and by promoting autophagy (By similarity).</text>
</comment>
<comment type="subunit">
    <text evidence="7 11 14">Interacts with FASN; the interaction is direct (PubMed:20519120). Interacts (via SRCR2 and SRCR3) with pentameric IgM (via Fc region); disulfide-linked (PubMed:23562157, PubMed:30324136).</text>
</comment>
<comment type="subcellular location">
    <subcellularLocation>
        <location evidence="7 10 15">Secreted</location>
    </subcellularLocation>
    <subcellularLocation>
        <location evidence="7">Cytoplasm</location>
    </subcellularLocation>
    <text evidence="7">Secreted by macrophages and circulates in the blood (PubMed:20519120). Transported in the cytoplasm via CD36-mediated endocytosis (PubMed:20519120).</text>
</comment>
<comment type="tissue specificity">
    <text evidence="4 12 15">Specifically expressed in tissue macrophages (PubMed:9892623). Expressed in thymus, liver, spleen and lymph nodes (PubMed:10651944). Present in Th17 cells; mainly present in non-pathogenic Th17 cells (PubMed:26607793).</text>
</comment>
<comment type="induction">
    <text>Transcription is activated by nuclear receptor liver X /retinoid X (RXR/LXR).</text>
</comment>
<comment type="PTM">
    <text evidence="4 10">N-glycosylated (PubMed:10651944, PubMed:23236605). N-glycan at Asn-99 possesses only alpha2,6-sialylated terminals, while Asn-229 possesses both alpha2,6-sialylated and non-sialylated terminals (PubMed:23236605). N-glycosylation increases secretion.</text>
</comment>
<comment type="disruption phenotype">
    <text evidence="7 12 15">Mice are apparently healthy under specific pathogen-free conditions. However, thymus of mice display much fewer thymocytes and CD4/CD8 double-positive (DP) thymocytes are more susceptible to apoptosis (PubMed:9892623). Increased adipocyte size and adipose tissue mass (PubMed:20519120). Higher level of free cholesterol in Th17 cells (PubMed:26607793).</text>
</comment>
<organism>
    <name type="scientific">Mus musculus</name>
    <name type="common">Mouse</name>
    <dbReference type="NCBI Taxonomy" id="10090"/>
    <lineage>
        <taxon>Eukaryota</taxon>
        <taxon>Metazoa</taxon>
        <taxon>Chordata</taxon>
        <taxon>Craniata</taxon>
        <taxon>Vertebrata</taxon>
        <taxon>Euteleostomi</taxon>
        <taxon>Mammalia</taxon>
        <taxon>Eutheria</taxon>
        <taxon>Euarchontoglires</taxon>
        <taxon>Glires</taxon>
        <taxon>Rodentia</taxon>
        <taxon>Myomorpha</taxon>
        <taxon>Muroidea</taxon>
        <taxon>Muridae</taxon>
        <taxon>Murinae</taxon>
        <taxon>Mus</taxon>
        <taxon>Mus</taxon>
    </lineage>
</organism>
<accession>Q9QWK4</accession>
<accession>O35300</accession>
<accession>O35301</accession>
<accession>Q3TXN5</accession>
<accession>Q505P6</accession>
<accession>Q91W05</accession>
<protein>
    <recommendedName>
        <fullName>CD5 antigen-like</fullName>
    </recommendedName>
    <alternativeName>
        <fullName evidence="19">Apoptosis inhibitor expressed by macrophages</fullName>
        <shortName evidence="17">mAIM</shortName>
    </alternativeName>
    <alternativeName>
        <fullName>Apoptosis inhibitory 6</fullName>
    </alternativeName>
    <alternativeName>
        <fullName evidence="16">SP-alpha</fullName>
    </alternativeName>
</protein>
<evidence type="ECO:0000250" key="1">
    <source>
        <dbReference type="UniProtKB" id="O43866"/>
    </source>
</evidence>
<evidence type="ECO:0000255" key="2"/>
<evidence type="ECO:0000255" key="3">
    <source>
        <dbReference type="PROSITE-ProRule" id="PRU00196"/>
    </source>
</evidence>
<evidence type="ECO:0000269" key="4">
    <source>
    </source>
</evidence>
<evidence type="ECO:0000269" key="5">
    <source>
    </source>
</evidence>
<evidence type="ECO:0000269" key="6">
    <source>
    </source>
</evidence>
<evidence type="ECO:0000269" key="7">
    <source>
    </source>
</evidence>
<evidence type="ECO:0000269" key="8">
    <source>
    </source>
</evidence>
<evidence type="ECO:0000269" key="9">
    <source>
    </source>
</evidence>
<evidence type="ECO:0000269" key="10">
    <source>
    </source>
</evidence>
<evidence type="ECO:0000269" key="11">
    <source>
    </source>
</evidence>
<evidence type="ECO:0000269" key="12">
    <source>
    </source>
</evidence>
<evidence type="ECO:0000269" key="13">
    <source>
    </source>
</evidence>
<evidence type="ECO:0000269" key="14">
    <source>
    </source>
</evidence>
<evidence type="ECO:0000269" key="15">
    <source>
    </source>
</evidence>
<evidence type="ECO:0000303" key="16">
    <source>
    </source>
</evidence>
<evidence type="ECO:0000303" key="17">
    <source>
    </source>
</evidence>
<evidence type="ECO:0000303" key="18">
    <source>
    </source>
</evidence>
<evidence type="ECO:0000303" key="19">
    <source>
    </source>
</evidence>
<evidence type="ECO:0000305" key="20"/>
<evidence type="ECO:0000305" key="21">
    <source>
    </source>
</evidence>